<gene>
    <name evidence="1" type="primary">thiC</name>
    <name type="ordered locus">Mpal_1977</name>
</gene>
<name>THIC_METPE</name>
<dbReference type="EC" id="4.1.99.17" evidence="1"/>
<dbReference type="EMBL" id="CP001338">
    <property type="protein sequence ID" value="ACL17280.1"/>
    <property type="molecule type" value="Genomic_DNA"/>
</dbReference>
<dbReference type="RefSeq" id="WP_012618599.1">
    <property type="nucleotide sequence ID" value="NC_011832.1"/>
</dbReference>
<dbReference type="SMR" id="B8GKY4"/>
<dbReference type="STRING" id="521011.Mpal_1977"/>
<dbReference type="GeneID" id="7270783"/>
<dbReference type="KEGG" id="mpl:Mpal_1977"/>
<dbReference type="eggNOG" id="arCOG02741">
    <property type="taxonomic scope" value="Archaea"/>
</dbReference>
<dbReference type="HOGENOM" id="CLU_013181_2_2_2"/>
<dbReference type="OrthoDB" id="335406at2157"/>
<dbReference type="UniPathway" id="UPA00060"/>
<dbReference type="Proteomes" id="UP000002457">
    <property type="component" value="Chromosome"/>
</dbReference>
<dbReference type="GO" id="GO:0051539">
    <property type="term" value="F:4 iron, 4 sulfur cluster binding"/>
    <property type="evidence" value="ECO:0007669"/>
    <property type="project" value="UniProtKB-KW"/>
</dbReference>
<dbReference type="GO" id="GO:0016830">
    <property type="term" value="F:carbon-carbon lyase activity"/>
    <property type="evidence" value="ECO:0007669"/>
    <property type="project" value="InterPro"/>
</dbReference>
<dbReference type="GO" id="GO:0008270">
    <property type="term" value="F:zinc ion binding"/>
    <property type="evidence" value="ECO:0007669"/>
    <property type="project" value="UniProtKB-UniRule"/>
</dbReference>
<dbReference type="GO" id="GO:0009228">
    <property type="term" value="P:thiamine biosynthetic process"/>
    <property type="evidence" value="ECO:0007669"/>
    <property type="project" value="UniProtKB-KW"/>
</dbReference>
<dbReference type="GO" id="GO:0009229">
    <property type="term" value="P:thiamine diphosphate biosynthetic process"/>
    <property type="evidence" value="ECO:0007669"/>
    <property type="project" value="UniProtKB-UniRule"/>
</dbReference>
<dbReference type="Gene3D" id="3.20.20.540">
    <property type="entry name" value="Radical SAM ThiC family, central domain"/>
    <property type="match status" value="1"/>
</dbReference>
<dbReference type="HAMAP" id="MF_00089">
    <property type="entry name" value="ThiC"/>
    <property type="match status" value="1"/>
</dbReference>
<dbReference type="InterPro" id="IPR037509">
    <property type="entry name" value="ThiC"/>
</dbReference>
<dbReference type="InterPro" id="IPR038521">
    <property type="entry name" value="ThiC/Bza_core_dom"/>
</dbReference>
<dbReference type="InterPro" id="IPR002817">
    <property type="entry name" value="ThiC/BzaA/B"/>
</dbReference>
<dbReference type="NCBIfam" id="NF009895">
    <property type="entry name" value="PRK13352.1"/>
    <property type="match status" value="1"/>
</dbReference>
<dbReference type="NCBIfam" id="TIGR00190">
    <property type="entry name" value="thiC"/>
    <property type="match status" value="1"/>
</dbReference>
<dbReference type="PANTHER" id="PTHR30557:SF1">
    <property type="entry name" value="PHOSPHOMETHYLPYRIMIDINE SYNTHASE, CHLOROPLASTIC"/>
    <property type="match status" value="1"/>
</dbReference>
<dbReference type="PANTHER" id="PTHR30557">
    <property type="entry name" value="THIAMINE BIOSYNTHESIS PROTEIN THIC"/>
    <property type="match status" value="1"/>
</dbReference>
<dbReference type="Pfam" id="PF01964">
    <property type="entry name" value="ThiC_Rad_SAM"/>
    <property type="match status" value="1"/>
</dbReference>
<dbReference type="SFLD" id="SFLDF00407">
    <property type="entry name" value="phosphomethylpyrimidine_syntha"/>
    <property type="match status" value="1"/>
</dbReference>
<dbReference type="SFLD" id="SFLDG01114">
    <property type="entry name" value="phosphomethylpyrimidine_syntha"/>
    <property type="match status" value="1"/>
</dbReference>
<dbReference type="SFLD" id="SFLDS00113">
    <property type="entry name" value="Radical_SAM_Phosphomethylpyrim"/>
    <property type="match status" value="1"/>
</dbReference>
<proteinExistence type="inferred from homology"/>
<evidence type="ECO:0000255" key="1">
    <source>
        <dbReference type="HAMAP-Rule" id="MF_00089"/>
    </source>
</evidence>
<feature type="chain" id="PRO_1000198069" description="Phosphomethylpyrimidine synthase">
    <location>
        <begin position="1"/>
        <end position="424"/>
    </location>
</feature>
<feature type="binding site" evidence="1">
    <location>
        <position position="94"/>
    </location>
    <ligand>
        <name>substrate</name>
    </ligand>
</feature>
<feature type="binding site" evidence="1">
    <location>
        <position position="123"/>
    </location>
    <ligand>
        <name>substrate</name>
    </ligand>
</feature>
<feature type="binding site" evidence="1">
    <location>
        <position position="162"/>
    </location>
    <ligand>
        <name>substrate</name>
    </ligand>
</feature>
<feature type="binding site" evidence="1">
    <location>
        <begin position="184"/>
        <end position="186"/>
    </location>
    <ligand>
        <name>substrate</name>
    </ligand>
</feature>
<feature type="binding site" evidence="1">
    <location>
        <begin position="225"/>
        <end position="228"/>
    </location>
    <ligand>
        <name>substrate</name>
    </ligand>
</feature>
<feature type="binding site" evidence="1">
    <location>
        <position position="264"/>
    </location>
    <ligand>
        <name>substrate</name>
    </ligand>
</feature>
<feature type="binding site" evidence="1">
    <location>
        <position position="268"/>
    </location>
    <ligand>
        <name>Zn(2+)</name>
        <dbReference type="ChEBI" id="CHEBI:29105"/>
    </ligand>
</feature>
<feature type="binding site" evidence="1">
    <location>
        <position position="291"/>
    </location>
    <ligand>
        <name>substrate</name>
    </ligand>
</feature>
<feature type="binding site" evidence="1">
    <location>
        <position position="332"/>
    </location>
    <ligand>
        <name>Zn(2+)</name>
        <dbReference type="ChEBI" id="CHEBI:29105"/>
    </ligand>
</feature>
<feature type="binding site" evidence="1">
    <location>
        <position position="406"/>
    </location>
    <ligand>
        <name>[4Fe-4S] cluster</name>
        <dbReference type="ChEBI" id="CHEBI:49883"/>
        <note>4Fe-4S-S-AdoMet</note>
    </ligand>
</feature>
<feature type="binding site" evidence="1">
    <location>
        <position position="409"/>
    </location>
    <ligand>
        <name>[4Fe-4S] cluster</name>
        <dbReference type="ChEBI" id="CHEBI:49883"/>
        <note>4Fe-4S-S-AdoMet</note>
    </ligand>
</feature>
<feature type="binding site" evidence="1">
    <location>
        <position position="413"/>
    </location>
    <ligand>
        <name>[4Fe-4S] cluster</name>
        <dbReference type="ChEBI" id="CHEBI:49883"/>
        <note>4Fe-4S-S-AdoMet</note>
    </ligand>
</feature>
<keyword id="KW-0004">4Fe-4S</keyword>
<keyword id="KW-0408">Iron</keyword>
<keyword id="KW-0411">Iron-sulfur</keyword>
<keyword id="KW-0456">Lyase</keyword>
<keyword id="KW-0479">Metal-binding</keyword>
<keyword id="KW-1185">Reference proteome</keyword>
<keyword id="KW-0949">S-adenosyl-L-methionine</keyword>
<keyword id="KW-0784">Thiamine biosynthesis</keyword>
<keyword id="KW-0862">Zinc</keyword>
<sequence>MSLIKDAQRGLVTEEMKLVAAQEGVTEEFVRKGVAGGHIVIPVSPYRKVKICGIGEGLRTKVNASIGTSSDISDVSVEIEKVRQAELAGADTLMELSTGGDLADIRRQVIAATSLSVGSVPLYQAFIEAAHKKGAVVDMEADDLFRITAEQAKAGTNFMAIHTGINYETMKRLQNQGRHAGLVSRGGAFMTAWMLHNEKENPLYAEFDYLLEIMKEHEVTLSMGNGMRAGAVHDSTDRAAIQELLINAELADKAFNEGVQTIVEGPGHVPIDEIQANVILQKRVTNRKPFYMLGPLVTDIAPGYDDRVAMVGAALSSSYGADFICYVTPAEHLALPTPEEVFEGVISSRIAAHIGDMVKLNKRDDDLEMGHARKALDWDRQYAVAINPKRAKEIRDSRMPADTDGCTMCGDYCAIKIVAKHFNF</sequence>
<organism>
    <name type="scientific">Methanosphaerula palustris (strain ATCC BAA-1556 / DSM 19958 / E1-9c)</name>
    <dbReference type="NCBI Taxonomy" id="521011"/>
    <lineage>
        <taxon>Archaea</taxon>
        <taxon>Methanobacteriati</taxon>
        <taxon>Methanobacteriota</taxon>
        <taxon>Stenosarchaea group</taxon>
        <taxon>Methanomicrobia</taxon>
        <taxon>Methanomicrobiales</taxon>
        <taxon>Methanoregulaceae</taxon>
        <taxon>Methanosphaerula</taxon>
    </lineage>
</organism>
<reference key="1">
    <citation type="journal article" date="2015" name="Genome Announc.">
        <title>Complete Genome Sequence of Methanosphaerula palustris E1-9CT, a Hydrogenotrophic Methanogen Isolated from a Minerotrophic Fen Peatland.</title>
        <authorList>
            <person name="Cadillo-Quiroz H."/>
            <person name="Browne P."/>
            <person name="Kyrpides N."/>
            <person name="Woyke T."/>
            <person name="Goodwin L."/>
            <person name="Detter C."/>
            <person name="Yavitt J.B."/>
            <person name="Zinder S.H."/>
        </authorList>
    </citation>
    <scope>NUCLEOTIDE SEQUENCE [LARGE SCALE GENOMIC DNA]</scope>
    <source>
        <strain>ATCC BAA-1556 / DSM 19958 / E1-9c</strain>
    </source>
</reference>
<protein>
    <recommendedName>
        <fullName evidence="1">Phosphomethylpyrimidine synthase</fullName>
        <ecNumber evidence="1">4.1.99.17</ecNumber>
    </recommendedName>
    <alternativeName>
        <fullName evidence="1">Hydroxymethylpyrimidine phosphate synthase</fullName>
        <shortName evidence="1">HMP-P synthase</shortName>
        <shortName evidence="1">HMP-phosphate synthase</shortName>
        <shortName evidence="1">HMPP synthase</shortName>
    </alternativeName>
    <alternativeName>
        <fullName evidence="1">Thiamine biosynthesis protein ThiC</fullName>
    </alternativeName>
</protein>
<comment type="function">
    <text evidence="1">Catalyzes the synthesis of the hydroxymethylpyrimidine phosphate (HMP-P) moiety of thiamine from aminoimidazole ribotide (AIR) in a radical S-adenosyl-L-methionine (SAM)-dependent reaction.</text>
</comment>
<comment type="catalytic activity">
    <reaction evidence="1">
        <text>5-amino-1-(5-phospho-beta-D-ribosyl)imidazole + S-adenosyl-L-methionine = 4-amino-2-methyl-5-(phosphooxymethyl)pyrimidine + CO + 5'-deoxyadenosine + formate + L-methionine + 3 H(+)</text>
        <dbReference type="Rhea" id="RHEA:24840"/>
        <dbReference type="ChEBI" id="CHEBI:15378"/>
        <dbReference type="ChEBI" id="CHEBI:15740"/>
        <dbReference type="ChEBI" id="CHEBI:17245"/>
        <dbReference type="ChEBI" id="CHEBI:17319"/>
        <dbReference type="ChEBI" id="CHEBI:57844"/>
        <dbReference type="ChEBI" id="CHEBI:58354"/>
        <dbReference type="ChEBI" id="CHEBI:59789"/>
        <dbReference type="ChEBI" id="CHEBI:137981"/>
        <dbReference type="EC" id="4.1.99.17"/>
    </reaction>
</comment>
<comment type="cofactor">
    <cofactor evidence="1">
        <name>[4Fe-4S] cluster</name>
        <dbReference type="ChEBI" id="CHEBI:49883"/>
    </cofactor>
    <text evidence="1">Binds 1 [4Fe-4S] cluster per subunit. The cluster is coordinated with 3 cysteines and an exchangeable S-adenosyl-L-methionine.</text>
</comment>
<comment type="pathway">
    <text evidence="1">Cofactor biosynthesis; thiamine diphosphate biosynthesis.</text>
</comment>
<comment type="similarity">
    <text evidence="1">Belongs to the ThiC family.</text>
</comment>
<accession>B8GKY4</accession>